<keyword id="KW-0090">Biological rhythms</keyword>
<keyword id="KW-0963">Cytoplasm</keyword>
<keyword id="KW-0539">Nucleus</keyword>
<keyword id="KW-0597">Phosphoprotein</keyword>
<keyword id="KW-0677">Repeat</keyword>
<accession>Q26287</accession>
<comment type="function">
    <text evidence="1">Essential for biological clock functions. Determines the period length of circadian and ultradian rhythms; an increase in PER dosage leads to shortened circadian rhythms and a decrease leads to lengthened circadian rhythms. Essential for the circadian rhythmicity of locomotor activity, eclosion behavior, and for the rhythmic component of the male courtship song that originates in the thoracic nervous system. The biological cycle depends on the rhythmic formation and nuclear localization of the TIM-PER complex. Light induces the degradation of TIM, which promotes elimination of PER. Nuclear activity of the heterodimer coordinatively regulates PER and TIM transcription through a negative feedback loop. Behaves as a negative element in circadian transcriptional loop. Does not appear to bind DNA, suggesting indirect transcriptional inhibition (By similarity).</text>
</comment>
<comment type="subunit">
    <text evidence="1">Forms a heterodimer with timeless (TIM); the complex then translocates into the nucleus.</text>
</comment>
<comment type="subcellular location">
    <subcellularLocation>
        <location evidence="1">Nucleus</location>
    </subcellularLocation>
    <subcellularLocation>
        <location evidence="1">Cytoplasm</location>
        <location evidence="1">Perinuclear region</location>
    </subcellularLocation>
    <text evidence="1">Nuclear at specific periods of the day. First accumulates in the perinuclear region about one hour before translocation into the nucleus. Interaction with Tim is required for nuclear localization (By similarity).</text>
</comment>
<comment type="domain">
    <text evidence="1">The run of Gly-Thr is implicated in the maintenance of circadian period at different temperatures. Deletion of the repeat leads to a shortening of the courtship song cycle period, and thus could be important for determining features of species-specific mating behavior (By similarity).</text>
</comment>
<comment type="PTM">
    <text evidence="1">Phosphorylated with a circadian rhythmicity, probably by the double-time protein (dbt). Phosphorylation could be implicated in the stability of per monomer and in the formation of heterodimer per-tim (By similarity).</text>
</comment>
<organism>
    <name type="scientific">Drosophila teissieri</name>
    <name type="common">Fruit fly</name>
    <dbReference type="NCBI Taxonomy" id="7243"/>
    <lineage>
        <taxon>Eukaryota</taxon>
        <taxon>Metazoa</taxon>
        <taxon>Ecdysozoa</taxon>
        <taxon>Arthropoda</taxon>
        <taxon>Hexapoda</taxon>
        <taxon>Insecta</taxon>
        <taxon>Pterygota</taxon>
        <taxon>Neoptera</taxon>
        <taxon>Endopterygota</taxon>
        <taxon>Diptera</taxon>
        <taxon>Brachycera</taxon>
        <taxon>Muscomorpha</taxon>
        <taxon>Ephydroidea</taxon>
        <taxon>Drosophilidae</taxon>
        <taxon>Drosophila</taxon>
        <taxon>Sophophora</taxon>
    </lineage>
</organism>
<gene>
    <name type="primary">per</name>
</gene>
<sequence length="88" mass="7961">EGSGGSGSSGNFTTASNIHMSSVTNTSIAGTGGTGTGTGTGTGTGTGTGTGTGTGTGTGTGNGSASSNYRGGGVAIQPVTLTESLLNK</sequence>
<proteinExistence type="inferred from homology"/>
<evidence type="ECO:0000250" key="1"/>
<evidence type="ECO:0000256" key="2">
    <source>
        <dbReference type="SAM" id="MobiDB-lite"/>
    </source>
</evidence>
<dbReference type="EMBL" id="S53300">
    <property type="protein sequence ID" value="AAB25030.2"/>
    <property type="molecule type" value="Genomic_DNA"/>
</dbReference>
<dbReference type="SMR" id="Q26287"/>
<dbReference type="GO" id="GO:0005634">
    <property type="term" value="C:nucleus"/>
    <property type="evidence" value="ECO:0007669"/>
    <property type="project" value="UniProtKB-SubCell"/>
</dbReference>
<dbReference type="GO" id="GO:0048471">
    <property type="term" value="C:perinuclear region of cytoplasm"/>
    <property type="evidence" value="ECO:0007669"/>
    <property type="project" value="UniProtKB-SubCell"/>
</dbReference>
<dbReference type="GO" id="GO:0048511">
    <property type="term" value="P:rhythmic process"/>
    <property type="evidence" value="ECO:0007669"/>
    <property type="project" value="UniProtKB-KW"/>
</dbReference>
<feature type="chain" id="PRO_0000162611" description="Period circadian protein">
    <location>
        <begin position="1" status="less than"/>
        <end position="88" status="greater than"/>
    </location>
</feature>
<feature type="repeat" description="1">
    <location>
        <begin position="30"/>
        <end position="31"/>
    </location>
</feature>
<feature type="repeat" description="2">
    <location>
        <begin position="33"/>
        <end position="34"/>
    </location>
</feature>
<feature type="repeat" description="3">
    <location>
        <begin position="35"/>
        <end position="36"/>
    </location>
</feature>
<feature type="repeat" description="4">
    <location>
        <begin position="37"/>
        <end position="38"/>
    </location>
</feature>
<feature type="repeat" description="5">
    <location>
        <begin position="39"/>
        <end position="40"/>
    </location>
</feature>
<feature type="repeat" description="6">
    <location>
        <begin position="41"/>
        <end position="42"/>
    </location>
</feature>
<feature type="repeat" description="7">
    <location>
        <begin position="43"/>
        <end position="44"/>
    </location>
</feature>
<feature type="repeat" description="8">
    <location>
        <begin position="45"/>
        <end position="46"/>
    </location>
</feature>
<feature type="repeat" description="9">
    <location>
        <begin position="47"/>
        <end position="48"/>
    </location>
</feature>
<feature type="repeat" description="10">
    <location>
        <begin position="49"/>
        <end position="50"/>
    </location>
</feature>
<feature type="repeat" description="11">
    <location>
        <begin position="51"/>
        <end position="52"/>
    </location>
</feature>
<feature type="repeat" description="12">
    <location>
        <begin position="53"/>
        <end position="54"/>
    </location>
</feature>
<feature type="repeat" description="13">
    <location>
        <begin position="55"/>
        <end position="56"/>
    </location>
</feature>
<feature type="repeat" description="14">
    <location>
        <begin position="57"/>
        <end position="58"/>
    </location>
</feature>
<feature type="repeat" description="15">
    <location>
        <begin position="59"/>
        <end position="60"/>
    </location>
</feature>
<feature type="repeat" description="16">
    <location>
        <begin position="61"/>
        <end position="62"/>
    </location>
</feature>
<feature type="region of interest" description="Disordered" evidence="2">
    <location>
        <begin position="23"/>
        <end position="88"/>
    </location>
</feature>
<feature type="region of interest" description="16 X 2 AA tandem repeats of G-[TN]">
    <location>
        <begin position="30"/>
        <end position="62"/>
    </location>
</feature>
<feature type="compositionally biased region" description="Gly residues" evidence="2">
    <location>
        <begin position="30"/>
        <end position="62"/>
    </location>
</feature>
<feature type="compositionally biased region" description="Polar residues" evidence="2">
    <location>
        <begin position="79"/>
        <end position="88"/>
    </location>
</feature>
<feature type="non-terminal residue">
    <location>
        <position position="1"/>
    </location>
</feature>
<feature type="non-terminal residue">
    <location>
        <position position="88"/>
    </location>
</feature>
<name>PER_DROTE</name>
<reference key="1">
    <citation type="journal article" date="1992" name="J. Mol. Evol.">
        <title>Evolution of the threonine-glycine repeat region of the period gene in the melanogaster species subgroup of Drosophila.</title>
        <authorList>
            <person name="Peixoto A.A."/>
            <person name="Costa R."/>
            <person name="Wheeler D.A."/>
            <person name="Hall J.C."/>
            <person name="Kyriacou C.P."/>
        </authorList>
    </citation>
    <scope>NUCLEOTIDE SEQUENCE [GENOMIC DNA]</scope>
</reference>
<protein>
    <recommendedName>
        <fullName>Period circadian protein</fullName>
    </recommendedName>
</protein>